<name>RL38_ANOGA</name>
<reference key="1">
    <citation type="journal article" date="2002" name="Science">
        <title>The genome sequence of the malaria mosquito Anopheles gambiae.</title>
        <authorList>
            <person name="Holt R.A."/>
            <person name="Subramanian G.M."/>
            <person name="Halpern A."/>
            <person name="Sutton G.G."/>
            <person name="Charlab R."/>
            <person name="Nusskern D.R."/>
            <person name="Wincker P."/>
            <person name="Clark A.G."/>
            <person name="Ribeiro J.M.C."/>
            <person name="Wides R."/>
            <person name="Salzberg S.L."/>
            <person name="Loftus B.J."/>
            <person name="Yandell M.D."/>
            <person name="Majoros W.H."/>
            <person name="Rusch D.B."/>
            <person name="Lai Z."/>
            <person name="Kraft C.L."/>
            <person name="Abril J.F."/>
            <person name="Anthouard V."/>
            <person name="Arensburger P."/>
            <person name="Atkinson P.W."/>
            <person name="Baden H."/>
            <person name="de Berardinis V."/>
            <person name="Baldwin D."/>
            <person name="Benes V."/>
            <person name="Biedler J."/>
            <person name="Blass C."/>
            <person name="Bolanos R."/>
            <person name="Boscus D."/>
            <person name="Barnstead M."/>
            <person name="Cai S."/>
            <person name="Center A."/>
            <person name="Chaturverdi K."/>
            <person name="Christophides G.K."/>
            <person name="Chrystal M.A.M."/>
            <person name="Clamp M."/>
            <person name="Cravchik A."/>
            <person name="Curwen V."/>
            <person name="Dana A."/>
            <person name="Delcher A."/>
            <person name="Dew I."/>
            <person name="Evans C.A."/>
            <person name="Flanigan M."/>
            <person name="Grundschober-Freimoser A."/>
            <person name="Friedli L."/>
            <person name="Gu Z."/>
            <person name="Guan P."/>
            <person name="Guigo R."/>
            <person name="Hillenmeyer M.E."/>
            <person name="Hladun S.L."/>
            <person name="Hogan J.R."/>
            <person name="Hong Y.S."/>
            <person name="Hoover J."/>
            <person name="Jaillon O."/>
            <person name="Ke Z."/>
            <person name="Kodira C.D."/>
            <person name="Kokoza E."/>
            <person name="Koutsos A."/>
            <person name="Letunic I."/>
            <person name="Levitsky A.A."/>
            <person name="Liang Y."/>
            <person name="Lin J.-J."/>
            <person name="Lobo N.F."/>
            <person name="Lopez J.R."/>
            <person name="Malek J.A."/>
            <person name="McIntosh T.C."/>
            <person name="Meister S."/>
            <person name="Miller J.R."/>
            <person name="Mobarry C."/>
            <person name="Mongin E."/>
            <person name="Murphy S.D."/>
            <person name="O'Brochta D.A."/>
            <person name="Pfannkoch C."/>
            <person name="Qi R."/>
            <person name="Regier M.A."/>
            <person name="Remington K."/>
            <person name="Shao H."/>
            <person name="Sharakhova M.V."/>
            <person name="Sitter C.D."/>
            <person name="Shetty J."/>
            <person name="Smith T.J."/>
            <person name="Strong R."/>
            <person name="Sun J."/>
            <person name="Thomasova D."/>
            <person name="Ton L.Q."/>
            <person name="Topalis P."/>
            <person name="Tu Z.J."/>
            <person name="Unger M.F."/>
            <person name="Walenz B."/>
            <person name="Wang A.H."/>
            <person name="Wang J."/>
            <person name="Wang M."/>
            <person name="Wang X."/>
            <person name="Woodford K.J."/>
            <person name="Wortman J.R."/>
            <person name="Wu M."/>
            <person name="Yao A."/>
            <person name="Zdobnov E.M."/>
            <person name="Zhang H."/>
            <person name="Zhao Q."/>
            <person name="Zhao S."/>
            <person name="Zhu S.C."/>
            <person name="Zhimulev I."/>
            <person name="Coluzzi M."/>
            <person name="della Torre A."/>
            <person name="Roth C.W."/>
            <person name="Louis C."/>
            <person name="Kalush F."/>
            <person name="Mural R.J."/>
            <person name="Myers E.W."/>
            <person name="Adams M.D."/>
            <person name="Smith H.O."/>
            <person name="Broder S."/>
            <person name="Gardner M.J."/>
            <person name="Fraser C.M."/>
            <person name="Birney E."/>
            <person name="Bork P."/>
            <person name="Brey P.T."/>
            <person name="Venter J.C."/>
            <person name="Weissenbach J."/>
            <person name="Kafatos F.C."/>
            <person name="Collins F.H."/>
            <person name="Hoffman S.L."/>
        </authorList>
    </citation>
    <scope>NUCLEOTIDE SEQUENCE [LARGE SCALE GENOMIC DNA]</scope>
    <source>
        <strain>PEST</strain>
    </source>
</reference>
<organism>
    <name type="scientific">Anopheles gambiae</name>
    <name type="common">African malaria mosquito</name>
    <dbReference type="NCBI Taxonomy" id="7165"/>
    <lineage>
        <taxon>Eukaryota</taxon>
        <taxon>Metazoa</taxon>
        <taxon>Ecdysozoa</taxon>
        <taxon>Arthropoda</taxon>
        <taxon>Hexapoda</taxon>
        <taxon>Insecta</taxon>
        <taxon>Pterygota</taxon>
        <taxon>Neoptera</taxon>
        <taxon>Endopterygota</taxon>
        <taxon>Diptera</taxon>
        <taxon>Nematocera</taxon>
        <taxon>Culicoidea</taxon>
        <taxon>Culicidae</taxon>
        <taxon>Anophelinae</taxon>
        <taxon>Anopheles</taxon>
    </lineage>
</organism>
<accession>Q7Q0U1</accession>
<feature type="chain" id="PRO_0000319554" description="Large ribosomal subunit protein eL38">
    <location>
        <begin position="1"/>
        <end position="70"/>
    </location>
</feature>
<proteinExistence type="inferred from homology"/>
<dbReference type="EMBL" id="AAAB01008980">
    <property type="protein sequence ID" value="EAA13878.2"/>
    <property type="molecule type" value="Genomic_DNA"/>
</dbReference>
<dbReference type="SMR" id="Q7Q0U1"/>
<dbReference type="FunCoup" id="Q7Q0U1">
    <property type="interactions" value="1220"/>
</dbReference>
<dbReference type="STRING" id="7165.Q7Q0U1"/>
<dbReference type="PaxDb" id="7165-AGAP010163-PA"/>
<dbReference type="EnsemblMetazoa" id="AGAP010163-RA">
    <property type="protein sequence ID" value="AGAP010163-PA"/>
    <property type="gene ID" value="AGAP010163"/>
</dbReference>
<dbReference type="GeneID" id="1279582"/>
<dbReference type="KEGG" id="aga:1279582"/>
<dbReference type="CTD" id="6169"/>
<dbReference type="VEuPathDB" id="VectorBase:AGAMI1_012446"/>
<dbReference type="VEuPathDB" id="VectorBase:AGAP010163"/>
<dbReference type="eggNOG" id="KOG3499">
    <property type="taxonomic scope" value="Eukaryota"/>
</dbReference>
<dbReference type="HOGENOM" id="CLU_152057_2_0_1"/>
<dbReference type="InParanoid" id="Q7Q0U1"/>
<dbReference type="OMA" id="RCHRFIY"/>
<dbReference type="PhylomeDB" id="Q7Q0U1"/>
<dbReference type="Proteomes" id="UP000007062">
    <property type="component" value="Chromosome 3R"/>
</dbReference>
<dbReference type="GO" id="GO:0022625">
    <property type="term" value="C:cytosolic large ribosomal subunit"/>
    <property type="evidence" value="ECO:0000318"/>
    <property type="project" value="GO_Central"/>
</dbReference>
<dbReference type="GO" id="GO:0003735">
    <property type="term" value="F:structural constituent of ribosome"/>
    <property type="evidence" value="ECO:0000318"/>
    <property type="project" value="GO_Central"/>
</dbReference>
<dbReference type="GO" id="GO:0022618">
    <property type="term" value="P:protein-RNA complex assembly"/>
    <property type="evidence" value="ECO:0000318"/>
    <property type="project" value="GO_Central"/>
</dbReference>
<dbReference type="GO" id="GO:0006412">
    <property type="term" value="P:translation"/>
    <property type="evidence" value="ECO:0007669"/>
    <property type="project" value="InterPro"/>
</dbReference>
<dbReference type="FunFam" id="3.30.720.90:FF:000001">
    <property type="entry name" value="60S ribosomal protein L38"/>
    <property type="match status" value="1"/>
</dbReference>
<dbReference type="Gene3D" id="3.30.720.90">
    <property type="match status" value="1"/>
</dbReference>
<dbReference type="InterPro" id="IPR002675">
    <property type="entry name" value="Ribosomal_eL38"/>
</dbReference>
<dbReference type="InterPro" id="IPR038464">
    <property type="entry name" value="Ribosomal_eL38_sf"/>
</dbReference>
<dbReference type="PANTHER" id="PTHR10965">
    <property type="entry name" value="60S RIBOSOMAL PROTEIN L38"/>
    <property type="match status" value="1"/>
</dbReference>
<dbReference type="PANTHER" id="PTHR10965:SF0">
    <property type="entry name" value="LARGE RIBOSOMAL SUBUNIT PROTEIN EL38"/>
    <property type="match status" value="1"/>
</dbReference>
<dbReference type="Pfam" id="PF01781">
    <property type="entry name" value="Ribosomal_L38e"/>
    <property type="match status" value="1"/>
</dbReference>
<keyword id="KW-1185">Reference proteome</keyword>
<keyword id="KW-0687">Ribonucleoprotein</keyword>
<keyword id="KW-0689">Ribosomal protein</keyword>
<protein>
    <recommendedName>
        <fullName evidence="1">Large ribosomal subunit protein eL38</fullName>
    </recommendedName>
    <alternativeName>
        <fullName>60S ribosomal protein L38</fullName>
    </alternativeName>
</protein>
<sequence length="70" mass="8277">MPQEIKEVKDFLIKARRKDARAVKIKKNETNTKFKIRCSRYLYTLVVKDMEKAEKLKQSLPPGLQVKEVK</sequence>
<comment type="similarity">
    <text evidence="1">Belongs to the eukaryotic ribosomal protein eL38 family.</text>
</comment>
<gene>
    <name type="primary">RpL38</name>
    <name type="ORF">AGAP010163</name>
</gene>
<evidence type="ECO:0000305" key="1"/>